<name>BIOB_CLOB8</name>
<sequence length="316" mass="35213">MEKLAEEIINGRRLTRSDDLEFLLTCDLKKICDGANKIRKTLCGESVDLCTIINGRSGKCSENCKFCAQSNHHKTEIKKYDFLDPNVILKDCKKNEANGVHRYSIVTAGRALVGSDFDKAVQAYKMMNKECSINLCASHGFLSEEQFVLLKEAGVTMYHANIETSKRNFHNICTTHSYDDKIKEIKLAQNAGLKVCSGGIIGMGETWYDRIDMAISLSELGVISIPINVLMPIKGTPLENLKRISNYDILRTIAIFRYINPTAYIRMAAGRTYFEDGGIEIFQSGSNATITGDMLTTVGNNTCQDKIMLQTLGFSI</sequence>
<proteinExistence type="inferred from homology"/>
<gene>
    <name evidence="1" type="primary">bioB</name>
    <name type="ordered locus">Cbei_1914</name>
</gene>
<organism>
    <name type="scientific">Clostridium beijerinckii (strain ATCC 51743 / NCIMB 8052)</name>
    <name type="common">Clostridium acetobutylicum</name>
    <dbReference type="NCBI Taxonomy" id="290402"/>
    <lineage>
        <taxon>Bacteria</taxon>
        <taxon>Bacillati</taxon>
        <taxon>Bacillota</taxon>
        <taxon>Clostridia</taxon>
        <taxon>Eubacteriales</taxon>
        <taxon>Clostridiaceae</taxon>
        <taxon>Clostridium</taxon>
    </lineage>
</organism>
<accession>A6LUQ4</accession>
<feature type="chain" id="PRO_0000381310" description="Biotin synthase">
    <location>
        <begin position="1"/>
        <end position="316"/>
    </location>
</feature>
<feature type="domain" description="Radical SAM core" evidence="2">
    <location>
        <begin position="42"/>
        <end position="268"/>
    </location>
</feature>
<feature type="binding site" evidence="1">
    <location>
        <position position="60"/>
    </location>
    <ligand>
        <name>[4Fe-4S] cluster</name>
        <dbReference type="ChEBI" id="CHEBI:49883"/>
        <note>4Fe-4S-S-AdoMet</note>
    </ligand>
</feature>
<feature type="binding site" evidence="1">
    <location>
        <position position="64"/>
    </location>
    <ligand>
        <name>[4Fe-4S] cluster</name>
        <dbReference type="ChEBI" id="CHEBI:49883"/>
        <note>4Fe-4S-S-AdoMet</note>
    </ligand>
</feature>
<feature type="binding site" evidence="1">
    <location>
        <position position="67"/>
    </location>
    <ligand>
        <name>[4Fe-4S] cluster</name>
        <dbReference type="ChEBI" id="CHEBI:49883"/>
        <note>4Fe-4S-S-AdoMet</note>
    </ligand>
</feature>
<feature type="binding site" evidence="1">
    <location>
        <position position="104"/>
    </location>
    <ligand>
        <name>[2Fe-2S] cluster</name>
        <dbReference type="ChEBI" id="CHEBI:190135"/>
    </ligand>
</feature>
<feature type="binding site" evidence="1">
    <location>
        <position position="136"/>
    </location>
    <ligand>
        <name>[2Fe-2S] cluster</name>
        <dbReference type="ChEBI" id="CHEBI:190135"/>
    </ligand>
</feature>
<feature type="binding site" evidence="1">
    <location>
        <position position="196"/>
    </location>
    <ligand>
        <name>[2Fe-2S] cluster</name>
        <dbReference type="ChEBI" id="CHEBI:190135"/>
    </ligand>
</feature>
<feature type="binding site" evidence="1">
    <location>
        <position position="266"/>
    </location>
    <ligand>
        <name>[2Fe-2S] cluster</name>
        <dbReference type="ChEBI" id="CHEBI:190135"/>
    </ligand>
</feature>
<comment type="function">
    <text evidence="1">Catalyzes the conversion of dethiobiotin (DTB) to biotin by the insertion of a sulfur atom into dethiobiotin via a radical-based mechanism.</text>
</comment>
<comment type="catalytic activity">
    <reaction evidence="1">
        <text>(4R,5S)-dethiobiotin + (sulfur carrier)-SH + 2 reduced [2Fe-2S]-[ferredoxin] + 2 S-adenosyl-L-methionine = (sulfur carrier)-H + biotin + 2 5'-deoxyadenosine + 2 L-methionine + 2 oxidized [2Fe-2S]-[ferredoxin]</text>
        <dbReference type="Rhea" id="RHEA:22060"/>
        <dbReference type="Rhea" id="RHEA-COMP:10000"/>
        <dbReference type="Rhea" id="RHEA-COMP:10001"/>
        <dbReference type="Rhea" id="RHEA-COMP:14737"/>
        <dbReference type="Rhea" id="RHEA-COMP:14739"/>
        <dbReference type="ChEBI" id="CHEBI:17319"/>
        <dbReference type="ChEBI" id="CHEBI:29917"/>
        <dbReference type="ChEBI" id="CHEBI:33737"/>
        <dbReference type="ChEBI" id="CHEBI:33738"/>
        <dbReference type="ChEBI" id="CHEBI:57586"/>
        <dbReference type="ChEBI" id="CHEBI:57844"/>
        <dbReference type="ChEBI" id="CHEBI:59789"/>
        <dbReference type="ChEBI" id="CHEBI:64428"/>
        <dbReference type="ChEBI" id="CHEBI:149473"/>
        <dbReference type="EC" id="2.8.1.6"/>
    </reaction>
</comment>
<comment type="cofactor">
    <cofactor evidence="1">
        <name>[4Fe-4S] cluster</name>
        <dbReference type="ChEBI" id="CHEBI:49883"/>
    </cofactor>
    <text evidence="1">Binds 1 [4Fe-4S] cluster. The cluster is coordinated with 3 cysteines and an exchangeable S-adenosyl-L-methionine.</text>
</comment>
<comment type="cofactor">
    <cofactor evidence="1">
        <name>[2Fe-2S] cluster</name>
        <dbReference type="ChEBI" id="CHEBI:190135"/>
    </cofactor>
    <text evidence="1">Binds 1 [2Fe-2S] cluster. The cluster is coordinated with 3 cysteines and 1 arginine.</text>
</comment>
<comment type="pathway">
    <text evidence="1">Cofactor biosynthesis; biotin biosynthesis; biotin from 7,8-diaminononanoate: step 2/2.</text>
</comment>
<comment type="subunit">
    <text evidence="1">Homodimer.</text>
</comment>
<comment type="similarity">
    <text evidence="1">Belongs to the radical SAM superfamily. Biotin synthase family.</text>
</comment>
<dbReference type="EC" id="2.8.1.6" evidence="1"/>
<dbReference type="EMBL" id="CP000721">
    <property type="protein sequence ID" value="ABR34084.1"/>
    <property type="molecule type" value="Genomic_DNA"/>
</dbReference>
<dbReference type="RefSeq" id="WP_012058145.1">
    <property type="nucleotide sequence ID" value="NC_009617.1"/>
</dbReference>
<dbReference type="SMR" id="A6LUQ4"/>
<dbReference type="KEGG" id="cbe:Cbei_1914"/>
<dbReference type="eggNOG" id="COG0502">
    <property type="taxonomic scope" value="Bacteria"/>
</dbReference>
<dbReference type="HOGENOM" id="CLU_033172_2_1_9"/>
<dbReference type="UniPathway" id="UPA00078">
    <property type="reaction ID" value="UER00162"/>
</dbReference>
<dbReference type="Proteomes" id="UP000000565">
    <property type="component" value="Chromosome"/>
</dbReference>
<dbReference type="GO" id="GO:0051537">
    <property type="term" value="F:2 iron, 2 sulfur cluster binding"/>
    <property type="evidence" value="ECO:0007669"/>
    <property type="project" value="UniProtKB-KW"/>
</dbReference>
<dbReference type="GO" id="GO:0051539">
    <property type="term" value="F:4 iron, 4 sulfur cluster binding"/>
    <property type="evidence" value="ECO:0007669"/>
    <property type="project" value="UniProtKB-KW"/>
</dbReference>
<dbReference type="GO" id="GO:0004076">
    <property type="term" value="F:biotin synthase activity"/>
    <property type="evidence" value="ECO:0007669"/>
    <property type="project" value="UniProtKB-UniRule"/>
</dbReference>
<dbReference type="GO" id="GO:0005506">
    <property type="term" value="F:iron ion binding"/>
    <property type="evidence" value="ECO:0007669"/>
    <property type="project" value="UniProtKB-UniRule"/>
</dbReference>
<dbReference type="GO" id="GO:0009102">
    <property type="term" value="P:biotin biosynthetic process"/>
    <property type="evidence" value="ECO:0007669"/>
    <property type="project" value="UniProtKB-UniRule"/>
</dbReference>
<dbReference type="CDD" id="cd01335">
    <property type="entry name" value="Radical_SAM"/>
    <property type="match status" value="1"/>
</dbReference>
<dbReference type="Gene3D" id="3.20.20.70">
    <property type="entry name" value="Aldolase class I"/>
    <property type="match status" value="1"/>
</dbReference>
<dbReference type="HAMAP" id="MF_01694">
    <property type="entry name" value="BioB"/>
    <property type="match status" value="1"/>
</dbReference>
<dbReference type="InterPro" id="IPR013785">
    <property type="entry name" value="Aldolase_TIM"/>
</dbReference>
<dbReference type="InterPro" id="IPR010722">
    <property type="entry name" value="BATS_dom"/>
</dbReference>
<dbReference type="InterPro" id="IPR002684">
    <property type="entry name" value="Biotin_synth/BioAB"/>
</dbReference>
<dbReference type="InterPro" id="IPR024177">
    <property type="entry name" value="Biotin_synthase"/>
</dbReference>
<dbReference type="InterPro" id="IPR006638">
    <property type="entry name" value="Elp3/MiaA/NifB-like_rSAM"/>
</dbReference>
<dbReference type="InterPro" id="IPR007197">
    <property type="entry name" value="rSAM"/>
</dbReference>
<dbReference type="NCBIfam" id="TIGR00433">
    <property type="entry name" value="bioB"/>
    <property type="match status" value="1"/>
</dbReference>
<dbReference type="PANTHER" id="PTHR22976">
    <property type="entry name" value="BIOTIN SYNTHASE"/>
    <property type="match status" value="1"/>
</dbReference>
<dbReference type="PANTHER" id="PTHR22976:SF2">
    <property type="entry name" value="BIOTIN SYNTHASE, MITOCHONDRIAL"/>
    <property type="match status" value="1"/>
</dbReference>
<dbReference type="Pfam" id="PF06968">
    <property type="entry name" value="BATS"/>
    <property type="match status" value="1"/>
</dbReference>
<dbReference type="Pfam" id="PF04055">
    <property type="entry name" value="Radical_SAM"/>
    <property type="match status" value="1"/>
</dbReference>
<dbReference type="PIRSF" id="PIRSF001619">
    <property type="entry name" value="Biotin_synth"/>
    <property type="match status" value="1"/>
</dbReference>
<dbReference type="SFLD" id="SFLDG01060">
    <property type="entry name" value="BATS_domain_containing"/>
    <property type="match status" value="1"/>
</dbReference>
<dbReference type="SFLD" id="SFLDG01278">
    <property type="entry name" value="biotin_synthase_like"/>
    <property type="match status" value="1"/>
</dbReference>
<dbReference type="SMART" id="SM00876">
    <property type="entry name" value="BATS"/>
    <property type="match status" value="1"/>
</dbReference>
<dbReference type="SMART" id="SM00729">
    <property type="entry name" value="Elp3"/>
    <property type="match status" value="1"/>
</dbReference>
<dbReference type="SUPFAM" id="SSF102114">
    <property type="entry name" value="Radical SAM enzymes"/>
    <property type="match status" value="1"/>
</dbReference>
<dbReference type="PROSITE" id="PS51918">
    <property type="entry name" value="RADICAL_SAM"/>
    <property type="match status" value="1"/>
</dbReference>
<reference key="1">
    <citation type="submission" date="2007-06" db="EMBL/GenBank/DDBJ databases">
        <title>Complete sequence of Clostridium beijerinckii NCIMB 8052.</title>
        <authorList>
            <consortium name="US DOE Joint Genome Institute"/>
            <person name="Copeland A."/>
            <person name="Lucas S."/>
            <person name="Lapidus A."/>
            <person name="Barry K."/>
            <person name="Detter J.C."/>
            <person name="Glavina del Rio T."/>
            <person name="Hammon N."/>
            <person name="Israni S."/>
            <person name="Dalin E."/>
            <person name="Tice H."/>
            <person name="Pitluck S."/>
            <person name="Sims D."/>
            <person name="Brettin T."/>
            <person name="Bruce D."/>
            <person name="Tapia R."/>
            <person name="Brainard J."/>
            <person name="Schmutz J."/>
            <person name="Larimer F."/>
            <person name="Land M."/>
            <person name="Hauser L."/>
            <person name="Kyrpides N."/>
            <person name="Mikhailova N."/>
            <person name="Bennet G."/>
            <person name="Cann I."/>
            <person name="Chen J.-S."/>
            <person name="Contreras A.L."/>
            <person name="Jones D."/>
            <person name="Kashket E."/>
            <person name="Mitchell W."/>
            <person name="Stoddard S."/>
            <person name="Schwarz W."/>
            <person name="Qureshi N."/>
            <person name="Young M."/>
            <person name="Shi Z."/>
            <person name="Ezeji T."/>
            <person name="White B."/>
            <person name="Blaschek H."/>
            <person name="Richardson P."/>
        </authorList>
    </citation>
    <scope>NUCLEOTIDE SEQUENCE [LARGE SCALE GENOMIC DNA]</scope>
    <source>
        <strain>ATCC 51743 / NCIMB 8052</strain>
    </source>
</reference>
<keyword id="KW-0001">2Fe-2S</keyword>
<keyword id="KW-0004">4Fe-4S</keyword>
<keyword id="KW-0093">Biotin biosynthesis</keyword>
<keyword id="KW-0408">Iron</keyword>
<keyword id="KW-0411">Iron-sulfur</keyword>
<keyword id="KW-0479">Metal-binding</keyword>
<keyword id="KW-0949">S-adenosyl-L-methionine</keyword>
<keyword id="KW-0808">Transferase</keyword>
<protein>
    <recommendedName>
        <fullName evidence="1">Biotin synthase</fullName>
        <ecNumber evidence="1">2.8.1.6</ecNumber>
    </recommendedName>
</protein>
<evidence type="ECO:0000255" key="1">
    <source>
        <dbReference type="HAMAP-Rule" id="MF_01694"/>
    </source>
</evidence>
<evidence type="ECO:0000255" key="2">
    <source>
        <dbReference type="PROSITE-ProRule" id="PRU01266"/>
    </source>
</evidence>